<organism>
    <name type="scientific">Escherichia coli O9:H4 (strain HS)</name>
    <dbReference type="NCBI Taxonomy" id="331112"/>
    <lineage>
        <taxon>Bacteria</taxon>
        <taxon>Pseudomonadati</taxon>
        <taxon>Pseudomonadota</taxon>
        <taxon>Gammaproteobacteria</taxon>
        <taxon>Enterobacterales</taxon>
        <taxon>Enterobacteriaceae</taxon>
        <taxon>Escherichia</taxon>
    </lineage>
</organism>
<gene>
    <name evidence="1" type="primary">menH</name>
    <name type="ordered locus">EcHS_A2409</name>
</gene>
<evidence type="ECO:0000255" key="1">
    <source>
        <dbReference type="HAMAP-Rule" id="MF_01660"/>
    </source>
</evidence>
<name>MENH_ECOHS</name>
<dbReference type="EC" id="4.2.99.20" evidence="1"/>
<dbReference type="EMBL" id="CP000802">
    <property type="protein sequence ID" value="ABV06685.1"/>
    <property type="molecule type" value="Genomic_DNA"/>
</dbReference>
<dbReference type="RefSeq" id="WP_000600503.1">
    <property type="nucleotide sequence ID" value="NC_009800.1"/>
</dbReference>
<dbReference type="SMR" id="A8A2D1"/>
<dbReference type="ESTHER" id="ecoli-YFBB">
    <property type="family name" value="MenH_SHCHC"/>
</dbReference>
<dbReference type="MEROPS" id="S33.996"/>
<dbReference type="KEGG" id="ecx:EcHS_A2409"/>
<dbReference type="HOGENOM" id="CLU_020336_38_2_6"/>
<dbReference type="UniPathway" id="UPA00079"/>
<dbReference type="UniPathway" id="UPA01057">
    <property type="reaction ID" value="UER00900"/>
</dbReference>
<dbReference type="GO" id="GO:0070205">
    <property type="term" value="F:2-succinyl-6-hydroxy-2,4-cyclohexadiene-1-carboxylate synthase activity"/>
    <property type="evidence" value="ECO:0007669"/>
    <property type="project" value="UniProtKB-UniRule"/>
</dbReference>
<dbReference type="GO" id="GO:0009234">
    <property type="term" value="P:menaquinone biosynthetic process"/>
    <property type="evidence" value="ECO:0007669"/>
    <property type="project" value="UniProtKB-UniRule"/>
</dbReference>
<dbReference type="FunFam" id="3.40.50.1820:FF:000038">
    <property type="entry name" value="2-succinyl-6-hydroxy-2,4-cyclohexadiene-1-carboxylate synthase"/>
    <property type="match status" value="1"/>
</dbReference>
<dbReference type="Gene3D" id="3.40.50.1820">
    <property type="entry name" value="alpha/beta hydrolase"/>
    <property type="match status" value="1"/>
</dbReference>
<dbReference type="HAMAP" id="MF_01660">
    <property type="entry name" value="MenH"/>
    <property type="match status" value="1"/>
</dbReference>
<dbReference type="InterPro" id="IPR000073">
    <property type="entry name" value="AB_hydrolase_1"/>
</dbReference>
<dbReference type="InterPro" id="IPR029058">
    <property type="entry name" value="AB_hydrolase_fold"/>
</dbReference>
<dbReference type="InterPro" id="IPR022485">
    <property type="entry name" value="SHCHC_synthase_MenH"/>
</dbReference>
<dbReference type="NCBIfam" id="TIGR03695">
    <property type="entry name" value="menH_SHCHC"/>
    <property type="match status" value="1"/>
</dbReference>
<dbReference type="NCBIfam" id="NF008340">
    <property type="entry name" value="PRK11126.1"/>
    <property type="match status" value="1"/>
</dbReference>
<dbReference type="PANTHER" id="PTHR42916">
    <property type="entry name" value="2-SUCCINYL-5-ENOLPYRUVYL-6-HYDROXY-3-CYCLOHEXENE-1-CARBOXYLATE SYNTHASE"/>
    <property type="match status" value="1"/>
</dbReference>
<dbReference type="PANTHER" id="PTHR42916:SF1">
    <property type="entry name" value="PROTEIN PHYLLO, CHLOROPLASTIC"/>
    <property type="match status" value="1"/>
</dbReference>
<dbReference type="Pfam" id="PF12697">
    <property type="entry name" value="Abhydrolase_6"/>
    <property type="match status" value="1"/>
</dbReference>
<dbReference type="SUPFAM" id="SSF53474">
    <property type="entry name" value="alpha/beta-Hydrolases"/>
    <property type="match status" value="1"/>
</dbReference>
<accession>A8A2D1</accession>
<comment type="function">
    <text evidence="1">Catalyzes a proton abstraction reaction that results in 2,5-elimination of pyruvate from 2-succinyl-5-enolpyruvyl-6-hydroxy-3-cyclohexene-1-carboxylate (SEPHCHC) and the formation of 2-succinyl-6-hydroxy-2,4-cyclohexadiene-1-carboxylate (SHCHC).</text>
</comment>
<comment type="catalytic activity">
    <reaction evidence="1">
        <text>5-enolpyruvoyl-6-hydroxy-2-succinyl-cyclohex-3-ene-1-carboxylate = (1R,6R)-6-hydroxy-2-succinyl-cyclohexa-2,4-diene-1-carboxylate + pyruvate</text>
        <dbReference type="Rhea" id="RHEA:25597"/>
        <dbReference type="ChEBI" id="CHEBI:15361"/>
        <dbReference type="ChEBI" id="CHEBI:58689"/>
        <dbReference type="ChEBI" id="CHEBI:58818"/>
        <dbReference type="EC" id="4.2.99.20"/>
    </reaction>
</comment>
<comment type="pathway">
    <text evidence="1">Quinol/quinone metabolism; 1,4-dihydroxy-2-naphthoate biosynthesis; 1,4-dihydroxy-2-naphthoate from chorismate: step 3/7.</text>
</comment>
<comment type="pathway">
    <text evidence="1">Quinol/quinone metabolism; menaquinone biosynthesis.</text>
</comment>
<comment type="subunit">
    <text evidence="1">Monomer.</text>
</comment>
<comment type="similarity">
    <text evidence="1">Belongs to the AB hydrolase superfamily. MenH family.</text>
</comment>
<feature type="chain" id="PRO_0000341914" description="2-succinyl-6-hydroxy-2,4-cyclohexadiene-1-carboxylate synthase">
    <location>
        <begin position="1"/>
        <end position="252"/>
    </location>
</feature>
<protein>
    <recommendedName>
        <fullName evidence="1">2-succinyl-6-hydroxy-2,4-cyclohexadiene-1-carboxylate synthase</fullName>
        <shortName evidence="1">SHCHC synthase</shortName>
        <ecNumber evidence="1">4.2.99.20</ecNumber>
    </recommendedName>
</protein>
<sequence length="252" mass="27702">MILHAQAKHGKPGLPWLVFLHGFSGDCHEWQEVGEAFADYSRLYVDLPGHGGSAAISVDGFDDVTDLLRKTLVSYNILDFWLVGYSLGGRVAMMAACQGLTGLCGVIVEGGHPGLQNAEQRAERQRSDRQWAQRFCTEPLTAVFADWYQQPVFASLNDDQRRELVVLRSNNNGATLAAMLEATSLAVQPDLRANLSARTFAFYYLCGERDSKFRALAAELAADCHVIPRAGHNAHRENPAGVIASLAQILRF</sequence>
<reference key="1">
    <citation type="journal article" date="2008" name="J. Bacteriol.">
        <title>The pangenome structure of Escherichia coli: comparative genomic analysis of E. coli commensal and pathogenic isolates.</title>
        <authorList>
            <person name="Rasko D.A."/>
            <person name="Rosovitz M.J."/>
            <person name="Myers G.S.A."/>
            <person name="Mongodin E.F."/>
            <person name="Fricke W.F."/>
            <person name="Gajer P."/>
            <person name="Crabtree J."/>
            <person name="Sebaihia M."/>
            <person name="Thomson N.R."/>
            <person name="Chaudhuri R."/>
            <person name="Henderson I.R."/>
            <person name="Sperandio V."/>
            <person name="Ravel J."/>
        </authorList>
    </citation>
    <scope>NUCLEOTIDE SEQUENCE [LARGE SCALE GENOMIC DNA]</scope>
    <source>
        <strain>HS</strain>
    </source>
</reference>
<keyword id="KW-0456">Lyase</keyword>
<keyword id="KW-0474">Menaquinone biosynthesis</keyword>
<proteinExistence type="inferred from homology"/>